<comment type="function">
    <text evidence="1">Binds as a heterodimer with protein bS6 to the central domain of the 16S rRNA, where it helps stabilize the platform of the 30S subunit.</text>
</comment>
<comment type="subunit">
    <text evidence="1">Part of the 30S ribosomal subunit. Forms a tight heterodimer with protein bS6.</text>
</comment>
<comment type="similarity">
    <text evidence="1">Belongs to the bacterial ribosomal protein bS18 family.</text>
</comment>
<keyword id="KW-1185">Reference proteome</keyword>
<keyword id="KW-0687">Ribonucleoprotein</keyword>
<keyword id="KW-0689">Ribosomal protein</keyword>
<keyword id="KW-0694">RNA-binding</keyword>
<keyword id="KW-0699">rRNA-binding</keyword>
<accession>Q4FS20</accession>
<protein>
    <recommendedName>
        <fullName evidence="1">Small ribosomal subunit protein bS18</fullName>
    </recommendedName>
    <alternativeName>
        <fullName evidence="2">30S ribosomal protein S18</fullName>
    </alternativeName>
</protein>
<proteinExistence type="inferred from homology"/>
<dbReference type="EMBL" id="CP000082">
    <property type="protein sequence ID" value="AAZ19188.1"/>
    <property type="molecule type" value="Genomic_DNA"/>
</dbReference>
<dbReference type="RefSeq" id="WP_010198808.1">
    <property type="nucleotide sequence ID" value="NC_007204.1"/>
</dbReference>
<dbReference type="SMR" id="Q4FS20"/>
<dbReference type="STRING" id="259536.Psyc_1338"/>
<dbReference type="GeneID" id="60254523"/>
<dbReference type="KEGG" id="par:Psyc_1338"/>
<dbReference type="eggNOG" id="COG0238">
    <property type="taxonomic scope" value="Bacteria"/>
</dbReference>
<dbReference type="HOGENOM" id="CLU_148710_2_3_6"/>
<dbReference type="OrthoDB" id="9812008at2"/>
<dbReference type="Proteomes" id="UP000000546">
    <property type="component" value="Chromosome"/>
</dbReference>
<dbReference type="GO" id="GO:0022627">
    <property type="term" value="C:cytosolic small ribosomal subunit"/>
    <property type="evidence" value="ECO:0007669"/>
    <property type="project" value="TreeGrafter"/>
</dbReference>
<dbReference type="GO" id="GO:0070181">
    <property type="term" value="F:small ribosomal subunit rRNA binding"/>
    <property type="evidence" value="ECO:0007669"/>
    <property type="project" value="TreeGrafter"/>
</dbReference>
<dbReference type="GO" id="GO:0003735">
    <property type="term" value="F:structural constituent of ribosome"/>
    <property type="evidence" value="ECO:0007669"/>
    <property type="project" value="InterPro"/>
</dbReference>
<dbReference type="GO" id="GO:0006412">
    <property type="term" value="P:translation"/>
    <property type="evidence" value="ECO:0007669"/>
    <property type="project" value="UniProtKB-UniRule"/>
</dbReference>
<dbReference type="FunFam" id="4.10.640.10:FF:000001">
    <property type="entry name" value="30S ribosomal protein S18"/>
    <property type="match status" value="1"/>
</dbReference>
<dbReference type="Gene3D" id="4.10.640.10">
    <property type="entry name" value="Ribosomal protein S18"/>
    <property type="match status" value="1"/>
</dbReference>
<dbReference type="HAMAP" id="MF_00270">
    <property type="entry name" value="Ribosomal_bS18"/>
    <property type="match status" value="1"/>
</dbReference>
<dbReference type="InterPro" id="IPR001648">
    <property type="entry name" value="Ribosomal_bS18"/>
</dbReference>
<dbReference type="InterPro" id="IPR018275">
    <property type="entry name" value="Ribosomal_bS18_CS"/>
</dbReference>
<dbReference type="InterPro" id="IPR036870">
    <property type="entry name" value="Ribosomal_bS18_sf"/>
</dbReference>
<dbReference type="NCBIfam" id="TIGR00165">
    <property type="entry name" value="S18"/>
    <property type="match status" value="1"/>
</dbReference>
<dbReference type="PANTHER" id="PTHR13479">
    <property type="entry name" value="30S RIBOSOMAL PROTEIN S18"/>
    <property type="match status" value="1"/>
</dbReference>
<dbReference type="PANTHER" id="PTHR13479:SF40">
    <property type="entry name" value="SMALL RIBOSOMAL SUBUNIT PROTEIN BS18M"/>
    <property type="match status" value="1"/>
</dbReference>
<dbReference type="Pfam" id="PF01084">
    <property type="entry name" value="Ribosomal_S18"/>
    <property type="match status" value="1"/>
</dbReference>
<dbReference type="PRINTS" id="PR00974">
    <property type="entry name" value="RIBOSOMALS18"/>
</dbReference>
<dbReference type="SUPFAM" id="SSF46911">
    <property type="entry name" value="Ribosomal protein S18"/>
    <property type="match status" value="1"/>
</dbReference>
<dbReference type="PROSITE" id="PS00057">
    <property type="entry name" value="RIBOSOMAL_S18"/>
    <property type="match status" value="1"/>
</dbReference>
<name>RS18_PSYA2</name>
<evidence type="ECO:0000255" key="1">
    <source>
        <dbReference type="HAMAP-Rule" id="MF_00270"/>
    </source>
</evidence>
<evidence type="ECO:0000305" key="2"/>
<gene>
    <name evidence="1" type="primary">rpsR</name>
    <name type="ordered locus">Psyc_1338</name>
</gene>
<sequence>MARFYRRRKFCRFTAEGITHIDYKDVELLKQYISDNGKIVPSRITGTSTKYQRQLATAIKQARYLSLLPYTDNHQG</sequence>
<feature type="chain" id="PRO_1000003576" description="Small ribosomal subunit protein bS18">
    <location>
        <begin position="1"/>
        <end position="76"/>
    </location>
</feature>
<reference key="1">
    <citation type="journal article" date="2010" name="Appl. Environ. Microbiol.">
        <title>The genome sequence of Psychrobacter arcticus 273-4, a psychroactive Siberian permafrost bacterium, reveals mechanisms for adaptation to low-temperature growth.</title>
        <authorList>
            <person name="Ayala-del-Rio H.L."/>
            <person name="Chain P.S."/>
            <person name="Grzymski J.J."/>
            <person name="Ponder M.A."/>
            <person name="Ivanova N."/>
            <person name="Bergholz P.W."/>
            <person name="Di Bartolo G."/>
            <person name="Hauser L."/>
            <person name="Land M."/>
            <person name="Bakermans C."/>
            <person name="Rodrigues D."/>
            <person name="Klappenbach J."/>
            <person name="Zarka D."/>
            <person name="Larimer F."/>
            <person name="Richardson P."/>
            <person name="Murray A."/>
            <person name="Thomashow M."/>
            <person name="Tiedje J.M."/>
        </authorList>
    </citation>
    <scope>NUCLEOTIDE SEQUENCE [LARGE SCALE GENOMIC DNA]</scope>
    <source>
        <strain>DSM 17307 / VKM B-2377 / 273-4</strain>
    </source>
</reference>
<organism>
    <name type="scientific">Psychrobacter arcticus (strain DSM 17307 / VKM B-2377 / 273-4)</name>
    <dbReference type="NCBI Taxonomy" id="259536"/>
    <lineage>
        <taxon>Bacteria</taxon>
        <taxon>Pseudomonadati</taxon>
        <taxon>Pseudomonadota</taxon>
        <taxon>Gammaproteobacteria</taxon>
        <taxon>Moraxellales</taxon>
        <taxon>Moraxellaceae</taxon>
        <taxon>Psychrobacter</taxon>
    </lineage>
</organism>